<evidence type="ECO:0000255" key="1">
    <source>
        <dbReference type="HAMAP-Rule" id="MF_00051"/>
    </source>
</evidence>
<proteinExistence type="inferred from homology"/>
<dbReference type="EC" id="2.1.2.1" evidence="1"/>
<dbReference type="EMBL" id="CP000806">
    <property type="protein sequence ID" value="ACB53299.1"/>
    <property type="molecule type" value="Genomic_DNA"/>
</dbReference>
<dbReference type="RefSeq" id="WP_009547217.1">
    <property type="nucleotide sequence ID" value="NC_010546.1"/>
</dbReference>
<dbReference type="SMR" id="B1WPY4"/>
<dbReference type="STRING" id="43989.cce_3951"/>
<dbReference type="KEGG" id="cyt:cce_3951"/>
<dbReference type="eggNOG" id="COG0112">
    <property type="taxonomic scope" value="Bacteria"/>
</dbReference>
<dbReference type="HOGENOM" id="CLU_022477_2_1_3"/>
<dbReference type="OrthoDB" id="9803846at2"/>
<dbReference type="UniPathway" id="UPA00193"/>
<dbReference type="UniPathway" id="UPA00288">
    <property type="reaction ID" value="UER01023"/>
</dbReference>
<dbReference type="Proteomes" id="UP000001203">
    <property type="component" value="Chromosome circular"/>
</dbReference>
<dbReference type="GO" id="GO:0005829">
    <property type="term" value="C:cytosol"/>
    <property type="evidence" value="ECO:0007669"/>
    <property type="project" value="TreeGrafter"/>
</dbReference>
<dbReference type="GO" id="GO:0004372">
    <property type="term" value="F:glycine hydroxymethyltransferase activity"/>
    <property type="evidence" value="ECO:0007669"/>
    <property type="project" value="UniProtKB-UniRule"/>
</dbReference>
<dbReference type="GO" id="GO:0030170">
    <property type="term" value="F:pyridoxal phosphate binding"/>
    <property type="evidence" value="ECO:0007669"/>
    <property type="project" value="UniProtKB-UniRule"/>
</dbReference>
<dbReference type="GO" id="GO:0019264">
    <property type="term" value="P:glycine biosynthetic process from serine"/>
    <property type="evidence" value="ECO:0007669"/>
    <property type="project" value="UniProtKB-UniRule"/>
</dbReference>
<dbReference type="GO" id="GO:0035999">
    <property type="term" value="P:tetrahydrofolate interconversion"/>
    <property type="evidence" value="ECO:0007669"/>
    <property type="project" value="UniProtKB-UniRule"/>
</dbReference>
<dbReference type="CDD" id="cd00378">
    <property type="entry name" value="SHMT"/>
    <property type="match status" value="1"/>
</dbReference>
<dbReference type="FunFam" id="3.40.640.10:FF:000001">
    <property type="entry name" value="Serine hydroxymethyltransferase"/>
    <property type="match status" value="1"/>
</dbReference>
<dbReference type="FunFam" id="3.90.1150.10:FF:000003">
    <property type="entry name" value="Serine hydroxymethyltransferase"/>
    <property type="match status" value="1"/>
</dbReference>
<dbReference type="Gene3D" id="3.90.1150.10">
    <property type="entry name" value="Aspartate Aminotransferase, domain 1"/>
    <property type="match status" value="1"/>
</dbReference>
<dbReference type="Gene3D" id="3.40.640.10">
    <property type="entry name" value="Type I PLP-dependent aspartate aminotransferase-like (Major domain)"/>
    <property type="match status" value="1"/>
</dbReference>
<dbReference type="HAMAP" id="MF_00051">
    <property type="entry name" value="SHMT"/>
    <property type="match status" value="1"/>
</dbReference>
<dbReference type="InterPro" id="IPR015424">
    <property type="entry name" value="PyrdxlP-dep_Trfase"/>
</dbReference>
<dbReference type="InterPro" id="IPR015421">
    <property type="entry name" value="PyrdxlP-dep_Trfase_major"/>
</dbReference>
<dbReference type="InterPro" id="IPR015422">
    <property type="entry name" value="PyrdxlP-dep_Trfase_small"/>
</dbReference>
<dbReference type="InterPro" id="IPR001085">
    <property type="entry name" value="Ser_HO-MeTrfase"/>
</dbReference>
<dbReference type="InterPro" id="IPR049943">
    <property type="entry name" value="Ser_HO-MeTrfase-like"/>
</dbReference>
<dbReference type="InterPro" id="IPR019798">
    <property type="entry name" value="Ser_HO-MeTrfase_PLP_BS"/>
</dbReference>
<dbReference type="InterPro" id="IPR039429">
    <property type="entry name" value="SHMT-like_dom"/>
</dbReference>
<dbReference type="NCBIfam" id="NF000586">
    <property type="entry name" value="PRK00011.1"/>
    <property type="match status" value="1"/>
</dbReference>
<dbReference type="PANTHER" id="PTHR11680">
    <property type="entry name" value="SERINE HYDROXYMETHYLTRANSFERASE"/>
    <property type="match status" value="1"/>
</dbReference>
<dbReference type="PANTHER" id="PTHR11680:SF35">
    <property type="entry name" value="SERINE HYDROXYMETHYLTRANSFERASE 1"/>
    <property type="match status" value="1"/>
</dbReference>
<dbReference type="Pfam" id="PF00464">
    <property type="entry name" value="SHMT"/>
    <property type="match status" value="1"/>
</dbReference>
<dbReference type="PIRSF" id="PIRSF000412">
    <property type="entry name" value="SHMT"/>
    <property type="match status" value="1"/>
</dbReference>
<dbReference type="SUPFAM" id="SSF53383">
    <property type="entry name" value="PLP-dependent transferases"/>
    <property type="match status" value="1"/>
</dbReference>
<dbReference type="PROSITE" id="PS00096">
    <property type="entry name" value="SHMT"/>
    <property type="match status" value="1"/>
</dbReference>
<comment type="function">
    <text evidence="1">Catalyzes the reversible interconversion of serine and glycine with tetrahydrofolate (THF) serving as the one-carbon carrier. This reaction serves as the major source of one-carbon groups required for the biosynthesis of purines, thymidylate, methionine, and other important biomolecules. Also exhibits THF-independent aldolase activity toward beta-hydroxyamino acids, producing glycine and aldehydes, via a retro-aldol mechanism.</text>
</comment>
<comment type="catalytic activity">
    <reaction evidence="1">
        <text>(6R)-5,10-methylene-5,6,7,8-tetrahydrofolate + glycine + H2O = (6S)-5,6,7,8-tetrahydrofolate + L-serine</text>
        <dbReference type="Rhea" id="RHEA:15481"/>
        <dbReference type="ChEBI" id="CHEBI:15377"/>
        <dbReference type="ChEBI" id="CHEBI:15636"/>
        <dbReference type="ChEBI" id="CHEBI:33384"/>
        <dbReference type="ChEBI" id="CHEBI:57305"/>
        <dbReference type="ChEBI" id="CHEBI:57453"/>
        <dbReference type="EC" id="2.1.2.1"/>
    </reaction>
</comment>
<comment type="cofactor">
    <cofactor evidence="1">
        <name>pyridoxal 5'-phosphate</name>
        <dbReference type="ChEBI" id="CHEBI:597326"/>
    </cofactor>
</comment>
<comment type="pathway">
    <text evidence="1">One-carbon metabolism; tetrahydrofolate interconversion.</text>
</comment>
<comment type="pathway">
    <text evidence="1">Amino-acid biosynthesis; glycine biosynthesis; glycine from L-serine: step 1/1.</text>
</comment>
<comment type="subunit">
    <text evidence="1">Homodimer.</text>
</comment>
<comment type="subcellular location">
    <subcellularLocation>
        <location evidence="1">Cytoplasm</location>
    </subcellularLocation>
</comment>
<comment type="similarity">
    <text evidence="1">Belongs to the SHMT family.</text>
</comment>
<accession>B1WPY4</accession>
<organism>
    <name type="scientific">Crocosphaera subtropica (strain ATCC 51142 / BH68)</name>
    <name type="common">Cyanothece sp. (strain ATCC 51142)</name>
    <dbReference type="NCBI Taxonomy" id="43989"/>
    <lineage>
        <taxon>Bacteria</taxon>
        <taxon>Bacillati</taxon>
        <taxon>Cyanobacteriota</taxon>
        <taxon>Cyanophyceae</taxon>
        <taxon>Oscillatoriophycideae</taxon>
        <taxon>Chroococcales</taxon>
        <taxon>Aphanothecaceae</taxon>
        <taxon>Crocosphaera</taxon>
        <taxon>Crocosphaera subtropica</taxon>
    </lineage>
</organism>
<name>GLYA_CROS5</name>
<gene>
    <name evidence="1" type="primary">glyA</name>
    <name type="ordered locus">cce_3951</name>
</gene>
<feature type="chain" id="PRO_1000091536" description="Serine hydroxymethyltransferase">
    <location>
        <begin position="1"/>
        <end position="427"/>
    </location>
</feature>
<feature type="binding site" evidence="1">
    <location>
        <position position="122"/>
    </location>
    <ligand>
        <name>(6S)-5,6,7,8-tetrahydrofolate</name>
        <dbReference type="ChEBI" id="CHEBI:57453"/>
    </ligand>
</feature>
<feature type="binding site" evidence="1">
    <location>
        <begin position="126"/>
        <end position="128"/>
    </location>
    <ligand>
        <name>(6S)-5,6,7,8-tetrahydrofolate</name>
        <dbReference type="ChEBI" id="CHEBI:57453"/>
    </ligand>
</feature>
<feature type="binding site" evidence="1">
    <location>
        <position position="247"/>
    </location>
    <ligand>
        <name>(6S)-5,6,7,8-tetrahydrofolate</name>
        <dbReference type="ChEBI" id="CHEBI:57453"/>
    </ligand>
</feature>
<feature type="binding site" evidence="1">
    <location>
        <begin position="355"/>
        <end position="357"/>
    </location>
    <ligand>
        <name>(6S)-5,6,7,8-tetrahydrofolate</name>
        <dbReference type="ChEBI" id="CHEBI:57453"/>
    </ligand>
</feature>
<feature type="site" description="Plays an important role in substrate specificity" evidence="1">
    <location>
        <position position="230"/>
    </location>
</feature>
<feature type="modified residue" description="N6-(pyridoxal phosphate)lysine" evidence="1">
    <location>
        <position position="231"/>
    </location>
</feature>
<reference key="1">
    <citation type="journal article" date="2008" name="Proc. Natl. Acad. Sci. U.S.A.">
        <title>The genome of Cyanothece 51142, a unicellular diazotrophic cyanobacterium important in the marine nitrogen cycle.</title>
        <authorList>
            <person name="Welsh E.A."/>
            <person name="Liberton M."/>
            <person name="Stoeckel J."/>
            <person name="Loh T."/>
            <person name="Elvitigala T."/>
            <person name="Wang C."/>
            <person name="Wollam A."/>
            <person name="Fulton R.S."/>
            <person name="Clifton S.W."/>
            <person name="Jacobs J.M."/>
            <person name="Aurora R."/>
            <person name="Ghosh B.K."/>
            <person name="Sherman L.A."/>
            <person name="Smith R.D."/>
            <person name="Wilson R.K."/>
            <person name="Pakrasi H.B."/>
        </authorList>
    </citation>
    <scope>NUCLEOTIDE SEQUENCE [LARGE SCALE GENOMIC DNA]</scope>
    <source>
        <strain>ATCC 51142 / BH68</strain>
    </source>
</reference>
<protein>
    <recommendedName>
        <fullName evidence="1">Serine hydroxymethyltransferase</fullName>
        <shortName evidence="1">SHMT</shortName>
        <shortName evidence="1">Serine methylase</shortName>
        <ecNumber evidence="1">2.1.2.1</ecNumber>
    </recommendedName>
</protein>
<sequence length="427" mass="46385">MTDTNLDFLAQTDPTLAAMIQGELQRQREHLELIASENFTSPAVLAAQGSVLTNKYAEGLPKKRYYGGCEWVDQAEQLAIDRAKELFGAAHANVQPHSGAQANFAVFLALLNPGDTIMGMDLSHGGHLTHGSPVNVSGKWFKVSHYGVSPDTERLDYDSILELAKKEKPKLLICGYSAYPRIIEFDKFRAIADEVGAYLMADIAHIAGLVASGHHPNPLPYCDVVTTTTHKTLRGPRGGLIMTNNPELGKQFDKAVFPGTQGGPLEQVIAAKAVAFGEALKPEFKVYSGQVIANAQALANQLNQRGFKLVSGGTDNHLMLVDLRCIDMTGKEADKLVSEINITANKNTVPFDPESPFVTSGLRLGSPAMTTRGLGVEEFREIGNIIADCLLNRNDEAVKKDCLNRVKALCDRFPLYPHLNIPVPVLA</sequence>
<keyword id="KW-0028">Amino-acid biosynthesis</keyword>
<keyword id="KW-0963">Cytoplasm</keyword>
<keyword id="KW-0554">One-carbon metabolism</keyword>
<keyword id="KW-0663">Pyridoxal phosphate</keyword>
<keyword id="KW-1185">Reference proteome</keyword>
<keyword id="KW-0808">Transferase</keyword>